<gene>
    <name evidence="1" type="primary">hcaD</name>
    <name type="ordered locus">BWG_2306</name>
</gene>
<feature type="chain" id="PRO_1000215851" description="3-phenylpropionate/cinnamic acid dioxygenase ferredoxin--NAD(+) reductase component">
    <location>
        <begin position="1"/>
        <end position="400"/>
    </location>
</feature>
<feature type="binding site" evidence="1">
    <location>
        <begin position="5"/>
        <end position="36"/>
    </location>
    <ligand>
        <name>FAD</name>
        <dbReference type="ChEBI" id="CHEBI:57692"/>
    </ligand>
</feature>
<feature type="binding site" evidence="1">
    <location>
        <begin position="146"/>
        <end position="174"/>
    </location>
    <ligand>
        <name>NAD(+)</name>
        <dbReference type="ChEBI" id="CHEBI:57540"/>
    </ligand>
</feature>
<comment type="function">
    <text evidence="1">Part of the multicomponent 3-phenylpropionate dioxygenase, that converts 3-phenylpropionic acid (PP) and cinnamic acid (CI) into 3-phenylpropionate-dihydrodiol (PP-dihydrodiol) and cinnamic acid-dihydrodiol (CI-dihydrodiol), respectively.</text>
</comment>
<comment type="catalytic activity">
    <reaction evidence="1">
        <text>2 reduced [2Fe-2S]-[ferredoxin] + NAD(+) + H(+) = 2 oxidized [2Fe-2S]-[ferredoxin] + NADH</text>
        <dbReference type="Rhea" id="RHEA:16521"/>
        <dbReference type="Rhea" id="RHEA-COMP:10000"/>
        <dbReference type="Rhea" id="RHEA-COMP:10001"/>
        <dbReference type="ChEBI" id="CHEBI:15378"/>
        <dbReference type="ChEBI" id="CHEBI:33737"/>
        <dbReference type="ChEBI" id="CHEBI:33738"/>
        <dbReference type="ChEBI" id="CHEBI:57540"/>
        <dbReference type="ChEBI" id="CHEBI:57945"/>
        <dbReference type="EC" id="1.18.1.3"/>
    </reaction>
</comment>
<comment type="cofactor">
    <cofactor evidence="1">
        <name>FAD</name>
        <dbReference type="ChEBI" id="CHEBI:57692"/>
    </cofactor>
</comment>
<comment type="pathway">
    <text evidence="1">Aromatic compound metabolism; 3-phenylpropanoate degradation.</text>
</comment>
<comment type="subunit">
    <text evidence="1">This dioxygenase system consists of four proteins: the two subunits of the hydroxylase component (HcaE and HcaF), a ferredoxin (HcaC) and a ferredoxin reductase (HcaD).</text>
</comment>
<comment type="similarity">
    <text evidence="1">Belongs to the bacterial ring-hydroxylating dioxygenase ferredoxin reductase family.</text>
</comment>
<reference key="1">
    <citation type="journal article" date="2009" name="J. Bacteriol.">
        <title>Genomic sequencing reveals regulatory mutations and recombinational events in the widely used MC4100 lineage of Escherichia coli K-12.</title>
        <authorList>
            <person name="Ferenci T."/>
            <person name="Zhou Z."/>
            <person name="Betteridge T."/>
            <person name="Ren Y."/>
            <person name="Liu Y."/>
            <person name="Feng L."/>
            <person name="Reeves P.R."/>
            <person name="Wang L."/>
        </authorList>
    </citation>
    <scope>NUCLEOTIDE SEQUENCE [LARGE SCALE GENOMIC DNA]</scope>
    <source>
        <strain>K12 / MC4100 / BW2952</strain>
    </source>
</reference>
<evidence type="ECO:0000255" key="1">
    <source>
        <dbReference type="HAMAP-Rule" id="MF_01651"/>
    </source>
</evidence>
<protein>
    <recommendedName>
        <fullName evidence="1">3-phenylpropionate/cinnamic acid dioxygenase ferredoxin--NAD(+) reductase component</fullName>
        <ecNumber evidence="1">1.18.1.3</ecNumber>
    </recommendedName>
</protein>
<accession>C4ZXB7</accession>
<sequence>MKEKTIIIVGGGQAAAMAAASLRQQGFTGELHLFSDERHLPYERPPLSKSMLLEDSPQLQQVLPANWWQENNVHLHSGVTIKTLGRDTRELVLTNGESWHWDQLFIATGAAARPLPLLDALGERCFTLRHAGDAARLREVLQPERSVVIIGAGTIGLELAASATQRRCKVTVIELAATVMGRNAPPPVQRYLLQRHQQAGVRILLNNAIEHVVDGEKVELTLQSGETLQADVVIYGIGISANEQLAREANLDTANGIVIDEACRTCDPAIFAGGDVAITRLDNGALHRCESWENANNQAQIAAAAMLGLPLPLLPPPWFWSDQYSDNLQFIGDMRGDDWLCRGNPETQKAIWFNLQNGVLIGAVTLNQGREIRPIRKWIQSGKTFDAKLLIDENIALKSL</sequence>
<dbReference type="EC" id="1.18.1.3" evidence="1"/>
<dbReference type="EMBL" id="CP001396">
    <property type="protein sequence ID" value="ACR64020.1"/>
    <property type="molecule type" value="Genomic_DNA"/>
</dbReference>
<dbReference type="RefSeq" id="WP_000660788.1">
    <property type="nucleotide sequence ID" value="NC_012759.1"/>
</dbReference>
<dbReference type="SMR" id="C4ZXB7"/>
<dbReference type="KEGG" id="ebw:BWG_2306"/>
<dbReference type="HOGENOM" id="CLU_003291_4_0_6"/>
<dbReference type="UniPathway" id="UPA00714"/>
<dbReference type="GO" id="GO:0005737">
    <property type="term" value="C:cytoplasm"/>
    <property type="evidence" value="ECO:0007669"/>
    <property type="project" value="TreeGrafter"/>
</dbReference>
<dbReference type="GO" id="GO:0008695">
    <property type="term" value="F:3-phenylpropionate dioxygenase activity"/>
    <property type="evidence" value="ECO:0007669"/>
    <property type="project" value="UniProtKB-UniRule"/>
</dbReference>
<dbReference type="GO" id="GO:0008860">
    <property type="term" value="F:ferredoxin-NAD+ reductase activity"/>
    <property type="evidence" value="ECO:0007669"/>
    <property type="project" value="UniProtKB-EC"/>
</dbReference>
<dbReference type="GO" id="GO:0016651">
    <property type="term" value="F:oxidoreductase activity, acting on NAD(P)H"/>
    <property type="evidence" value="ECO:0007669"/>
    <property type="project" value="TreeGrafter"/>
</dbReference>
<dbReference type="GO" id="GO:0019380">
    <property type="term" value="P:3-phenylpropionate catabolic process"/>
    <property type="evidence" value="ECO:0007669"/>
    <property type="project" value="UniProtKB-UniRule"/>
</dbReference>
<dbReference type="FunFam" id="3.30.390.30:FF:000010">
    <property type="entry name" value="3-phenylpropionate/cinnamic acid dioxygenase ferredoxin--NAD(+) reductase component"/>
    <property type="match status" value="1"/>
</dbReference>
<dbReference type="FunFam" id="3.50.50.60:FF:000088">
    <property type="entry name" value="3-phenylpropionate/cinnamic acid dioxygenase ferredoxin--NAD(+) reductase component"/>
    <property type="match status" value="1"/>
</dbReference>
<dbReference type="Gene3D" id="3.30.390.30">
    <property type="match status" value="1"/>
</dbReference>
<dbReference type="Gene3D" id="3.50.50.60">
    <property type="entry name" value="FAD/NAD(P)-binding domain"/>
    <property type="match status" value="2"/>
</dbReference>
<dbReference type="HAMAP" id="MF_01651">
    <property type="entry name" value="HcaD"/>
    <property type="match status" value="1"/>
</dbReference>
<dbReference type="InterPro" id="IPR050446">
    <property type="entry name" value="FAD-oxidoreductase/Apoptosis"/>
</dbReference>
<dbReference type="InterPro" id="IPR036188">
    <property type="entry name" value="FAD/NAD-bd_sf"/>
</dbReference>
<dbReference type="InterPro" id="IPR023753">
    <property type="entry name" value="FAD/NAD-binding_dom"/>
</dbReference>
<dbReference type="InterPro" id="IPR016156">
    <property type="entry name" value="FAD/NAD-linked_Rdtase_dimer_sf"/>
</dbReference>
<dbReference type="InterPro" id="IPR023744">
    <property type="entry name" value="HcaD"/>
</dbReference>
<dbReference type="InterPro" id="IPR028202">
    <property type="entry name" value="Reductase_C"/>
</dbReference>
<dbReference type="InterPro" id="IPR053382">
    <property type="entry name" value="Ring-hydroxylating_dioxygenase"/>
</dbReference>
<dbReference type="NCBIfam" id="NF042949">
    <property type="entry name" value="3PPDioc_HcaD"/>
    <property type="match status" value="1"/>
</dbReference>
<dbReference type="NCBIfam" id="NF007286">
    <property type="entry name" value="PRK09754.1"/>
    <property type="match status" value="1"/>
</dbReference>
<dbReference type="PANTHER" id="PTHR43557">
    <property type="entry name" value="APOPTOSIS-INDUCING FACTOR 1"/>
    <property type="match status" value="1"/>
</dbReference>
<dbReference type="PANTHER" id="PTHR43557:SF2">
    <property type="entry name" value="RIESKE DOMAIN-CONTAINING PROTEIN-RELATED"/>
    <property type="match status" value="1"/>
</dbReference>
<dbReference type="Pfam" id="PF07992">
    <property type="entry name" value="Pyr_redox_2"/>
    <property type="match status" value="1"/>
</dbReference>
<dbReference type="Pfam" id="PF14759">
    <property type="entry name" value="Reductase_C"/>
    <property type="match status" value="1"/>
</dbReference>
<dbReference type="PRINTS" id="PR00368">
    <property type="entry name" value="FADPNR"/>
</dbReference>
<dbReference type="PRINTS" id="PR00411">
    <property type="entry name" value="PNDRDTASEI"/>
</dbReference>
<dbReference type="SUPFAM" id="SSF51905">
    <property type="entry name" value="FAD/NAD(P)-binding domain"/>
    <property type="match status" value="1"/>
</dbReference>
<dbReference type="SUPFAM" id="SSF55424">
    <property type="entry name" value="FAD/NAD-linked reductases, dimerisation (C-terminal) domain"/>
    <property type="match status" value="1"/>
</dbReference>
<name>HCAD_ECOBW</name>
<proteinExistence type="inferred from homology"/>
<keyword id="KW-0058">Aromatic hydrocarbons catabolism</keyword>
<keyword id="KW-0274">FAD</keyword>
<keyword id="KW-0285">Flavoprotein</keyword>
<keyword id="KW-0520">NAD</keyword>
<keyword id="KW-0560">Oxidoreductase</keyword>
<organism>
    <name type="scientific">Escherichia coli (strain K12 / MC4100 / BW2952)</name>
    <dbReference type="NCBI Taxonomy" id="595496"/>
    <lineage>
        <taxon>Bacteria</taxon>
        <taxon>Pseudomonadati</taxon>
        <taxon>Pseudomonadota</taxon>
        <taxon>Gammaproteobacteria</taxon>
        <taxon>Enterobacterales</taxon>
        <taxon>Enterobacteriaceae</taxon>
        <taxon>Escherichia</taxon>
    </lineage>
</organism>